<accession>B2K7N4</accession>
<comment type="function">
    <text evidence="1">Catalyzes the oxidation of 5,10-methylenetetrahydrofolate to 5,10-methenyltetrahydrofolate and then the hydrolysis of 5,10-methenyltetrahydrofolate to 10-formyltetrahydrofolate.</text>
</comment>
<comment type="catalytic activity">
    <reaction evidence="1">
        <text>(6R)-5,10-methylene-5,6,7,8-tetrahydrofolate + NADP(+) = (6R)-5,10-methenyltetrahydrofolate + NADPH</text>
        <dbReference type="Rhea" id="RHEA:22812"/>
        <dbReference type="ChEBI" id="CHEBI:15636"/>
        <dbReference type="ChEBI" id="CHEBI:57455"/>
        <dbReference type="ChEBI" id="CHEBI:57783"/>
        <dbReference type="ChEBI" id="CHEBI:58349"/>
        <dbReference type="EC" id="1.5.1.5"/>
    </reaction>
</comment>
<comment type="catalytic activity">
    <reaction evidence="1">
        <text>(6R)-5,10-methenyltetrahydrofolate + H2O = (6R)-10-formyltetrahydrofolate + H(+)</text>
        <dbReference type="Rhea" id="RHEA:23700"/>
        <dbReference type="ChEBI" id="CHEBI:15377"/>
        <dbReference type="ChEBI" id="CHEBI:15378"/>
        <dbReference type="ChEBI" id="CHEBI:57455"/>
        <dbReference type="ChEBI" id="CHEBI:195366"/>
        <dbReference type="EC" id="3.5.4.9"/>
    </reaction>
</comment>
<comment type="pathway">
    <text evidence="1">One-carbon metabolism; tetrahydrofolate interconversion.</text>
</comment>
<comment type="subunit">
    <text evidence="1">Homodimer.</text>
</comment>
<comment type="similarity">
    <text evidence="1">Belongs to the tetrahydrofolate dehydrogenase/cyclohydrolase family.</text>
</comment>
<organism>
    <name type="scientific">Yersinia pseudotuberculosis serotype IB (strain PB1/+)</name>
    <dbReference type="NCBI Taxonomy" id="502801"/>
    <lineage>
        <taxon>Bacteria</taxon>
        <taxon>Pseudomonadati</taxon>
        <taxon>Pseudomonadota</taxon>
        <taxon>Gammaproteobacteria</taxon>
        <taxon>Enterobacterales</taxon>
        <taxon>Yersiniaceae</taxon>
        <taxon>Yersinia</taxon>
    </lineage>
</organism>
<reference key="1">
    <citation type="submission" date="2008-04" db="EMBL/GenBank/DDBJ databases">
        <title>Complete sequence of Yersinia pseudotuberculosis PB1/+.</title>
        <authorList>
            <person name="Copeland A."/>
            <person name="Lucas S."/>
            <person name="Lapidus A."/>
            <person name="Glavina del Rio T."/>
            <person name="Dalin E."/>
            <person name="Tice H."/>
            <person name="Bruce D."/>
            <person name="Goodwin L."/>
            <person name="Pitluck S."/>
            <person name="Munk A.C."/>
            <person name="Brettin T."/>
            <person name="Detter J.C."/>
            <person name="Han C."/>
            <person name="Tapia R."/>
            <person name="Schmutz J."/>
            <person name="Larimer F."/>
            <person name="Land M."/>
            <person name="Hauser L."/>
            <person name="Challacombe J.F."/>
            <person name="Green L."/>
            <person name="Lindler L.E."/>
            <person name="Nikolich M.P."/>
            <person name="Richardson P."/>
        </authorList>
    </citation>
    <scope>NUCLEOTIDE SEQUENCE [LARGE SCALE GENOMIC DNA]</scope>
    <source>
        <strain>PB1/+</strain>
    </source>
</reference>
<evidence type="ECO:0000255" key="1">
    <source>
        <dbReference type="HAMAP-Rule" id="MF_01576"/>
    </source>
</evidence>
<keyword id="KW-0028">Amino-acid biosynthesis</keyword>
<keyword id="KW-0368">Histidine biosynthesis</keyword>
<keyword id="KW-0378">Hydrolase</keyword>
<keyword id="KW-0486">Methionine biosynthesis</keyword>
<keyword id="KW-0511">Multifunctional enzyme</keyword>
<keyword id="KW-0521">NADP</keyword>
<keyword id="KW-0554">One-carbon metabolism</keyword>
<keyword id="KW-0560">Oxidoreductase</keyword>
<keyword id="KW-0658">Purine biosynthesis</keyword>
<feature type="chain" id="PRO_1000147539" description="Bifunctional protein FolD">
    <location>
        <begin position="1"/>
        <end position="288"/>
    </location>
</feature>
<feature type="binding site" evidence="1">
    <location>
        <begin position="166"/>
        <end position="168"/>
    </location>
    <ligand>
        <name>NADP(+)</name>
        <dbReference type="ChEBI" id="CHEBI:58349"/>
    </ligand>
</feature>
<feature type="binding site" evidence="1">
    <location>
        <position position="232"/>
    </location>
    <ligand>
        <name>NADP(+)</name>
        <dbReference type="ChEBI" id="CHEBI:58349"/>
    </ligand>
</feature>
<name>FOLD_YERPB</name>
<proteinExistence type="inferred from homology"/>
<sequence length="288" mass="30983">MSAKIIDGKTIAQQVRNEVAAVVQQRLAAGKRAPGLAVVLVGENPASQIYVASKRKACEEVGFVSRSYDLPMATSEAELLALIDSLNEDTEIDGILIQLPLPNGIDNVKVLERIHPDKDVDGFHPYNVGRLCQRAPKLRACTPRGIMTLLERYDIPTYGLNAVVVGASNIVGRPMSLELLLAGCTTTVTHRFTKNLRHHIENADLLVVAVGKPGFIPGEWIKPGAIVIDVGINRLESGKVVGDVAFDVAAERAGWITPVPGGVGPMTVATLIQNTLQACEEYHDISQN</sequence>
<gene>
    <name evidence="1" type="primary">folD</name>
    <name type="ordered locus">YPTS_1085</name>
</gene>
<protein>
    <recommendedName>
        <fullName evidence="1">Bifunctional protein FolD</fullName>
    </recommendedName>
    <domain>
        <recommendedName>
            <fullName evidence="1">Methylenetetrahydrofolate dehydrogenase</fullName>
            <ecNumber evidence="1">1.5.1.5</ecNumber>
        </recommendedName>
    </domain>
    <domain>
        <recommendedName>
            <fullName evidence="1">Methenyltetrahydrofolate cyclohydrolase</fullName>
            <ecNumber evidence="1">3.5.4.9</ecNumber>
        </recommendedName>
    </domain>
</protein>
<dbReference type="EC" id="1.5.1.5" evidence="1"/>
<dbReference type="EC" id="3.5.4.9" evidence="1"/>
<dbReference type="EMBL" id="CP001048">
    <property type="protein sequence ID" value="ACC88064.1"/>
    <property type="molecule type" value="Genomic_DNA"/>
</dbReference>
<dbReference type="RefSeq" id="WP_002209774.1">
    <property type="nucleotide sequence ID" value="NZ_CP009780.1"/>
</dbReference>
<dbReference type="SMR" id="B2K7N4"/>
<dbReference type="GeneID" id="57975784"/>
<dbReference type="KEGG" id="ypb:YPTS_1085"/>
<dbReference type="PATRIC" id="fig|502801.10.peg.428"/>
<dbReference type="UniPathway" id="UPA00193"/>
<dbReference type="GO" id="GO:0005829">
    <property type="term" value="C:cytosol"/>
    <property type="evidence" value="ECO:0007669"/>
    <property type="project" value="TreeGrafter"/>
</dbReference>
<dbReference type="GO" id="GO:0004477">
    <property type="term" value="F:methenyltetrahydrofolate cyclohydrolase activity"/>
    <property type="evidence" value="ECO:0007669"/>
    <property type="project" value="UniProtKB-UniRule"/>
</dbReference>
<dbReference type="GO" id="GO:0004488">
    <property type="term" value="F:methylenetetrahydrofolate dehydrogenase (NADP+) activity"/>
    <property type="evidence" value="ECO:0007669"/>
    <property type="project" value="UniProtKB-UniRule"/>
</dbReference>
<dbReference type="GO" id="GO:0000105">
    <property type="term" value="P:L-histidine biosynthetic process"/>
    <property type="evidence" value="ECO:0007669"/>
    <property type="project" value="UniProtKB-KW"/>
</dbReference>
<dbReference type="GO" id="GO:0009086">
    <property type="term" value="P:methionine biosynthetic process"/>
    <property type="evidence" value="ECO:0007669"/>
    <property type="project" value="UniProtKB-KW"/>
</dbReference>
<dbReference type="GO" id="GO:0006164">
    <property type="term" value="P:purine nucleotide biosynthetic process"/>
    <property type="evidence" value="ECO:0007669"/>
    <property type="project" value="UniProtKB-KW"/>
</dbReference>
<dbReference type="GO" id="GO:0035999">
    <property type="term" value="P:tetrahydrofolate interconversion"/>
    <property type="evidence" value="ECO:0007669"/>
    <property type="project" value="UniProtKB-UniRule"/>
</dbReference>
<dbReference type="CDD" id="cd01080">
    <property type="entry name" value="NAD_bind_m-THF_DH_Cyclohyd"/>
    <property type="match status" value="1"/>
</dbReference>
<dbReference type="FunFam" id="3.40.50.10860:FF:000001">
    <property type="entry name" value="Bifunctional protein FolD"/>
    <property type="match status" value="1"/>
</dbReference>
<dbReference type="FunFam" id="3.40.50.720:FF:000006">
    <property type="entry name" value="Bifunctional protein FolD"/>
    <property type="match status" value="1"/>
</dbReference>
<dbReference type="Gene3D" id="3.40.50.10860">
    <property type="entry name" value="Leucine Dehydrogenase, chain A, domain 1"/>
    <property type="match status" value="1"/>
</dbReference>
<dbReference type="Gene3D" id="3.40.50.720">
    <property type="entry name" value="NAD(P)-binding Rossmann-like Domain"/>
    <property type="match status" value="1"/>
</dbReference>
<dbReference type="HAMAP" id="MF_01576">
    <property type="entry name" value="THF_DHG_CYH"/>
    <property type="match status" value="1"/>
</dbReference>
<dbReference type="InterPro" id="IPR046346">
    <property type="entry name" value="Aminoacid_DH-like_N_sf"/>
</dbReference>
<dbReference type="InterPro" id="IPR036291">
    <property type="entry name" value="NAD(P)-bd_dom_sf"/>
</dbReference>
<dbReference type="InterPro" id="IPR000672">
    <property type="entry name" value="THF_DH/CycHdrlase"/>
</dbReference>
<dbReference type="InterPro" id="IPR020630">
    <property type="entry name" value="THF_DH/CycHdrlase_cat_dom"/>
</dbReference>
<dbReference type="InterPro" id="IPR020867">
    <property type="entry name" value="THF_DH/CycHdrlase_CS"/>
</dbReference>
<dbReference type="InterPro" id="IPR020631">
    <property type="entry name" value="THF_DH/CycHdrlase_NAD-bd_dom"/>
</dbReference>
<dbReference type="NCBIfam" id="NF008058">
    <property type="entry name" value="PRK10792.1"/>
    <property type="match status" value="1"/>
</dbReference>
<dbReference type="NCBIfam" id="NF010783">
    <property type="entry name" value="PRK14186.1"/>
    <property type="match status" value="1"/>
</dbReference>
<dbReference type="PANTHER" id="PTHR48099:SF5">
    <property type="entry name" value="C-1-TETRAHYDROFOLATE SYNTHASE, CYTOPLASMIC"/>
    <property type="match status" value="1"/>
</dbReference>
<dbReference type="PANTHER" id="PTHR48099">
    <property type="entry name" value="C-1-TETRAHYDROFOLATE SYNTHASE, CYTOPLASMIC-RELATED"/>
    <property type="match status" value="1"/>
</dbReference>
<dbReference type="Pfam" id="PF00763">
    <property type="entry name" value="THF_DHG_CYH"/>
    <property type="match status" value="1"/>
</dbReference>
<dbReference type="Pfam" id="PF02882">
    <property type="entry name" value="THF_DHG_CYH_C"/>
    <property type="match status" value="1"/>
</dbReference>
<dbReference type="PRINTS" id="PR00085">
    <property type="entry name" value="THFDHDRGNASE"/>
</dbReference>
<dbReference type="SUPFAM" id="SSF53223">
    <property type="entry name" value="Aminoacid dehydrogenase-like, N-terminal domain"/>
    <property type="match status" value="1"/>
</dbReference>
<dbReference type="SUPFAM" id="SSF51735">
    <property type="entry name" value="NAD(P)-binding Rossmann-fold domains"/>
    <property type="match status" value="1"/>
</dbReference>
<dbReference type="PROSITE" id="PS00766">
    <property type="entry name" value="THF_DHG_CYH_1"/>
    <property type="match status" value="1"/>
</dbReference>
<dbReference type="PROSITE" id="PS00767">
    <property type="entry name" value="THF_DHG_CYH_2"/>
    <property type="match status" value="1"/>
</dbReference>